<reference key="1">
    <citation type="journal article" date="1996" name="Proc. Natl. Acad. Sci. U.S.A.">
        <title>A cdc5+ homolog of a higher plant, Arabidopsis thaliana.</title>
        <authorList>
            <person name="Hirayama T."/>
            <person name="Shinozaki K."/>
        </authorList>
    </citation>
    <scope>NUCLEOTIDE SEQUENCE [MRNA]</scope>
    <scope>FUNCTION</scope>
    <scope>TISSUE SPECIFICITY</scope>
    <source>
        <strain>cv. Columbia</strain>
    </source>
</reference>
<reference key="2">
    <citation type="journal article" date="2006" name="Plant Mol. Biol.">
        <title>The MYB transcription factor superfamily of Arabidopsis: expression analysis and phylogenetic comparison with the rice MYB family.</title>
        <authorList>
            <person name="Chen Y."/>
            <person name="Yang X."/>
            <person name="He K."/>
            <person name="Liu M."/>
            <person name="Li J."/>
            <person name="Gao Z."/>
            <person name="Lin Z."/>
            <person name="Zhang Y."/>
            <person name="Wang X."/>
            <person name="Qiu X."/>
            <person name="Shen Y."/>
            <person name="Zhang L."/>
            <person name="Deng X."/>
            <person name="Luo J."/>
            <person name="Deng X.-W."/>
            <person name="Chen Z."/>
            <person name="Gu H."/>
            <person name="Qu L.-J."/>
        </authorList>
    </citation>
    <scope>NUCLEOTIDE SEQUENCE [MRNA]</scope>
    <scope>GENE FAMILY</scope>
    <source>
        <strain>cv. Columbia</strain>
    </source>
</reference>
<reference key="3">
    <citation type="journal article" date="2000" name="Nature">
        <title>Sequence and analysis of chromosome 1 of the plant Arabidopsis thaliana.</title>
        <authorList>
            <person name="Theologis A."/>
            <person name="Ecker J.R."/>
            <person name="Palm C.J."/>
            <person name="Federspiel N.A."/>
            <person name="Kaul S."/>
            <person name="White O."/>
            <person name="Alonso J."/>
            <person name="Altafi H."/>
            <person name="Araujo R."/>
            <person name="Bowman C.L."/>
            <person name="Brooks S.Y."/>
            <person name="Buehler E."/>
            <person name="Chan A."/>
            <person name="Chao Q."/>
            <person name="Chen H."/>
            <person name="Cheuk R.F."/>
            <person name="Chin C.W."/>
            <person name="Chung M.K."/>
            <person name="Conn L."/>
            <person name="Conway A.B."/>
            <person name="Conway A.R."/>
            <person name="Creasy T.H."/>
            <person name="Dewar K."/>
            <person name="Dunn P."/>
            <person name="Etgu P."/>
            <person name="Feldblyum T.V."/>
            <person name="Feng J.-D."/>
            <person name="Fong B."/>
            <person name="Fujii C.Y."/>
            <person name="Gill J.E."/>
            <person name="Goldsmith A.D."/>
            <person name="Haas B."/>
            <person name="Hansen N.F."/>
            <person name="Hughes B."/>
            <person name="Huizar L."/>
            <person name="Hunter J.L."/>
            <person name="Jenkins J."/>
            <person name="Johnson-Hopson C."/>
            <person name="Khan S."/>
            <person name="Khaykin E."/>
            <person name="Kim C.J."/>
            <person name="Koo H.L."/>
            <person name="Kremenetskaia I."/>
            <person name="Kurtz D.B."/>
            <person name="Kwan A."/>
            <person name="Lam B."/>
            <person name="Langin-Hooper S."/>
            <person name="Lee A."/>
            <person name="Lee J.M."/>
            <person name="Lenz C.A."/>
            <person name="Li J.H."/>
            <person name="Li Y.-P."/>
            <person name="Lin X."/>
            <person name="Liu S.X."/>
            <person name="Liu Z.A."/>
            <person name="Luros J.S."/>
            <person name="Maiti R."/>
            <person name="Marziali A."/>
            <person name="Militscher J."/>
            <person name="Miranda M."/>
            <person name="Nguyen M."/>
            <person name="Nierman W.C."/>
            <person name="Osborne B.I."/>
            <person name="Pai G."/>
            <person name="Peterson J."/>
            <person name="Pham P.K."/>
            <person name="Rizzo M."/>
            <person name="Rooney T."/>
            <person name="Rowley D."/>
            <person name="Sakano H."/>
            <person name="Salzberg S.L."/>
            <person name="Schwartz J.R."/>
            <person name="Shinn P."/>
            <person name="Southwick A.M."/>
            <person name="Sun H."/>
            <person name="Tallon L.J."/>
            <person name="Tambunga G."/>
            <person name="Toriumi M.J."/>
            <person name="Town C.D."/>
            <person name="Utterback T."/>
            <person name="Van Aken S."/>
            <person name="Vaysberg M."/>
            <person name="Vysotskaia V.S."/>
            <person name="Walker M."/>
            <person name="Wu D."/>
            <person name="Yu G."/>
            <person name="Fraser C.M."/>
            <person name="Venter J.C."/>
            <person name="Davis R.W."/>
        </authorList>
    </citation>
    <scope>NUCLEOTIDE SEQUENCE [LARGE SCALE GENOMIC DNA]</scope>
    <source>
        <strain>cv. Columbia</strain>
    </source>
</reference>
<reference key="4">
    <citation type="journal article" date="2017" name="Plant J.">
        <title>Araport11: a complete reannotation of the Arabidopsis thaliana reference genome.</title>
        <authorList>
            <person name="Cheng C.Y."/>
            <person name="Krishnakumar V."/>
            <person name="Chan A.P."/>
            <person name="Thibaud-Nissen F."/>
            <person name="Schobel S."/>
            <person name="Town C.D."/>
        </authorList>
    </citation>
    <scope>GENOME REANNOTATION</scope>
    <source>
        <strain>cv. Columbia</strain>
    </source>
</reference>
<reference key="5">
    <citation type="journal article" date="2003" name="Science">
        <title>Empirical analysis of transcriptional activity in the Arabidopsis genome.</title>
        <authorList>
            <person name="Yamada K."/>
            <person name="Lim J."/>
            <person name="Dale J.M."/>
            <person name="Chen H."/>
            <person name="Shinn P."/>
            <person name="Palm C.J."/>
            <person name="Southwick A.M."/>
            <person name="Wu H.C."/>
            <person name="Kim C.J."/>
            <person name="Nguyen M."/>
            <person name="Pham P.K."/>
            <person name="Cheuk R.F."/>
            <person name="Karlin-Newmann G."/>
            <person name="Liu S.X."/>
            <person name="Lam B."/>
            <person name="Sakano H."/>
            <person name="Wu T."/>
            <person name="Yu G."/>
            <person name="Miranda M."/>
            <person name="Quach H.L."/>
            <person name="Tripp M."/>
            <person name="Chang C.H."/>
            <person name="Lee J.M."/>
            <person name="Toriumi M.J."/>
            <person name="Chan M.M."/>
            <person name="Tang C.C."/>
            <person name="Onodera C.S."/>
            <person name="Deng J.M."/>
            <person name="Akiyama K."/>
            <person name="Ansari Y."/>
            <person name="Arakawa T."/>
            <person name="Banh J."/>
            <person name="Banno F."/>
            <person name="Bowser L."/>
            <person name="Brooks S.Y."/>
            <person name="Carninci P."/>
            <person name="Chao Q."/>
            <person name="Choy N."/>
            <person name="Enju A."/>
            <person name="Goldsmith A.D."/>
            <person name="Gurjal M."/>
            <person name="Hansen N.F."/>
            <person name="Hayashizaki Y."/>
            <person name="Johnson-Hopson C."/>
            <person name="Hsuan V.W."/>
            <person name="Iida K."/>
            <person name="Karnes M."/>
            <person name="Khan S."/>
            <person name="Koesema E."/>
            <person name="Ishida J."/>
            <person name="Jiang P.X."/>
            <person name="Jones T."/>
            <person name="Kawai J."/>
            <person name="Kamiya A."/>
            <person name="Meyers C."/>
            <person name="Nakajima M."/>
            <person name="Narusaka M."/>
            <person name="Seki M."/>
            <person name="Sakurai T."/>
            <person name="Satou M."/>
            <person name="Tamse R."/>
            <person name="Vaysberg M."/>
            <person name="Wallender E.K."/>
            <person name="Wong C."/>
            <person name="Yamamura Y."/>
            <person name="Yuan S."/>
            <person name="Shinozaki K."/>
            <person name="Davis R.W."/>
            <person name="Theologis A."/>
            <person name="Ecker J.R."/>
        </authorList>
    </citation>
    <scope>NUCLEOTIDE SEQUENCE [LARGE SCALE MRNA]</scope>
    <source>
        <strain>cv. Columbia</strain>
    </source>
</reference>
<reference key="6">
    <citation type="journal article" date="2009" name="DNA Res.">
        <title>Analysis of multiple occurrences of alternative splicing events in Arabidopsis thaliana using novel sequenced full-length cDNAs.</title>
        <authorList>
            <person name="Iida K."/>
            <person name="Fukami-Kobayashi K."/>
            <person name="Toyoda A."/>
            <person name="Sakaki Y."/>
            <person name="Kobayashi M."/>
            <person name="Seki M."/>
            <person name="Shinozaki K."/>
        </authorList>
    </citation>
    <scope>NUCLEOTIDE SEQUENCE [LARGE SCALE MRNA] OF 1-504</scope>
    <source>
        <strain>cv. Columbia</strain>
        <tissue>Rosette leaf</tissue>
    </source>
</reference>
<reference key="7">
    <citation type="journal article" date="2001" name="Curr. Opin. Plant Biol.">
        <title>The R2R3-MYB gene family in Arabidopsis thaliana.</title>
        <authorList>
            <person name="Stracke R."/>
            <person name="Werber M."/>
            <person name="Weisshaar B."/>
        </authorList>
    </citation>
    <scope>GENE FAMILY</scope>
</reference>
<reference key="8">
    <citation type="journal article" date="2007" name="Genes Dev.">
        <title>Regulation of plant innate immunity by three proteins in a complex conserved across the plant and animal kingdoms.</title>
        <authorList>
            <person name="Palma K."/>
            <person name="Zhao Q."/>
            <person name="Cheng Y.T."/>
            <person name="Bi D."/>
            <person name="Monaghan J."/>
            <person name="Cheng W."/>
            <person name="Zhang Y."/>
            <person name="Li X."/>
        </authorList>
    </citation>
    <scope>DISRUPTION PHENOTYPE</scope>
    <scope>FUNCTION</scope>
    <scope>COMPONENT OF THE MAC COMPLEX</scope>
    <scope>INTERACTION WITH PRL1 AND MOS4</scope>
</reference>
<reference key="9">
    <citation type="journal article" date="2007" name="Plant Physiol. Biochem.">
        <title>Virus induced gene silencing of AtCDC5 results in accelerated cell death in Arabidopsis leaves.</title>
        <authorList>
            <person name="Lin Z."/>
            <person name="Yin K."/>
            <person name="Wang X."/>
            <person name="Liu M."/>
            <person name="Chen Z."/>
            <person name="Gu H."/>
            <person name="Qu L.J."/>
        </authorList>
    </citation>
    <scope>DISRUPTION PHENOTYPE</scope>
    <scope>FUNCTION</scope>
    <scope>SUBCELLULAR LOCATION</scope>
</reference>
<reference key="10">
    <citation type="journal article" date="2009" name="PLoS Pathog.">
        <title>Two Prp19-like U-box proteins in the MOS4-associated complex play redundant roles in plant innate immunity.</title>
        <authorList>
            <person name="Monaghan J."/>
            <person name="Xu F."/>
            <person name="Gao M."/>
            <person name="Zhao Q."/>
            <person name="Palma K."/>
            <person name="Long C."/>
            <person name="Chen S."/>
            <person name="Zhang Y."/>
            <person name="Li X."/>
        </authorList>
    </citation>
    <scope>IDENTIFICATION BY MASS SPECTROMETRY</scope>
    <scope>COMPONENT OF THE MAC COMPLEX</scope>
    <scope>INTERACTION WITH PRP19A</scope>
</reference>
<reference key="11">
    <citation type="journal article" date="2009" name="Plant Physiol.">
        <title>Large-scale Arabidopsis phosphoproteome profiling reveals novel chloroplast kinase substrates and phosphorylation networks.</title>
        <authorList>
            <person name="Reiland S."/>
            <person name="Messerli G."/>
            <person name="Baerenfaller K."/>
            <person name="Gerrits B."/>
            <person name="Endler A."/>
            <person name="Grossmann J."/>
            <person name="Gruissem W."/>
            <person name="Baginsky S."/>
        </authorList>
    </citation>
    <scope>PHOSPHORYLATION [LARGE SCALE ANALYSIS] AT THR-343</scope>
    <scope>IDENTIFICATION BY MASS SPECTROMETRY [LARGE SCALE ANALYSIS]</scope>
</reference>
<dbReference type="EMBL" id="D58424">
    <property type="protein sequence ID" value="BAA09598.1"/>
    <property type="molecule type" value="mRNA"/>
</dbReference>
<dbReference type="EMBL" id="AY519553">
    <property type="protein sequence ID" value="AAS10023.1"/>
    <property type="molecule type" value="mRNA"/>
</dbReference>
<dbReference type="EMBL" id="AC000132">
    <property type="protein sequence ID" value="AAB60730.1"/>
    <property type="molecule type" value="Genomic_DNA"/>
</dbReference>
<dbReference type="EMBL" id="CP002684">
    <property type="protein sequence ID" value="AEE28490.1"/>
    <property type="molecule type" value="Genomic_DNA"/>
</dbReference>
<dbReference type="EMBL" id="AY093057">
    <property type="protein sequence ID" value="AAM13056.1"/>
    <property type="molecule type" value="mRNA"/>
</dbReference>
<dbReference type="EMBL" id="BT008801">
    <property type="protein sequence ID" value="AAP68240.1"/>
    <property type="molecule type" value="mRNA"/>
</dbReference>
<dbReference type="EMBL" id="AK316890">
    <property type="protein sequence ID" value="BAH19597.1"/>
    <property type="molecule type" value="mRNA"/>
</dbReference>
<dbReference type="PIR" id="F86231">
    <property type="entry name" value="F86231"/>
</dbReference>
<dbReference type="RefSeq" id="NP_172448.1">
    <property type="nucleotide sequence ID" value="NM_100849.3"/>
</dbReference>
<dbReference type="SMR" id="P92948"/>
<dbReference type="BioGRID" id="22747">
    <property type="interactions" value="24"/>
</dbReference>
<dbReference type="FunCoup" id="P92948">
    <property type="interactions" value="4646"/>
</dbReference>
<dbReference type="IntAct" id="P92948">
    <property type="interactions" value="7"/>
</dbReference>
<dbReference type="STRING" id="3702.P92948"/>
<dbReference type="GlyGen" id="P92948">
    <property type="glycosylation" value="1 site"/>
</dbReference>
<dbReference type="iPTMnet" id="P92948"/>
<dbReference type="PaxDb" id="3702-AT1G09770.1"/>
<dbReference type="ProteomicsDB" id="222807"/>
<dbReference type="EnsemblPlants" id="AT1G09770.1">
    <property type="protein sequence ID" value="AT1G09770.1"/>
    <property type="gene ID" value="AT1G09770"/>
</dbReference>
<dbReference type="GeneID" id="837506"/>
<dbReference type="Gramene" id="AT1G09770.1">
    <property type="protein sequence ID" value="AT1G09770.1"/>
    <property type="gene ID" value="AT1G09770"/>
</dbReference>
<dbReference type="KEGG" id="ath:AT1G09770"/>
<dbReference type="Araport" id="AT1G09770"/>
<dbReference type="TAIR" id="AT1G09770">
    <property type="gene designation" value="CDC5"/>
</dbReference>
<dbReference type="eggNOG" id="KOG0050">
    <property type="taxonomic scope" value="Eukaryota"/>
</dbReference>
<dbReference type="HOGENOM" id="CLU_009082_1_0_1"/>
<dbReference type="InParanoid" id="P92948"/>
<dbReference type="OMA" id="CVAMGNE"/>
<dbReference type="PhylomeDB" id="P92948"/>
<dbReference type="CD-CODE" id="4299E36E">
    <property type="entry name" value="Nucleolus"/>
</dbReference>
<dbReference type="PRO" id="PR:P92948"/>
<dbReference type="Proteomes" id="UP000006548">
    <property type="component" value="Chromosome 1"/>
</dbReference>
<dbReference type="ExpressionAtlas" id="P92948">
    <property type="expression patterns" value="baseline and differential"/>
</dbReference>
<dbReference type="GO" id="GO:0005576">
    <property type="term" value="C:extracellular region"/>
    <property type="evidence" value="ECO:0007005"/>
    <property type="project" value="TAIR"/>
</dbReference>
<dbReference type="GO" id="GO:0000974">
    <property type="term" value="C:Prp19 complex"/>
    <property type="evidence" value="ECO:0007669"/>
    <property type="project" value="InterPro"/>
</dbReference>
<dbReference type="GO" id="GO:0005681">
    <property type="term" value="C:spliceosomal complex"/>
    <property type="evidence" value="ECO:0007669"/>
    <property type="project" value="UniProtKB-KW"/>
</dbReference>
<dbReference type="GO" id="GO:0003677">
    <property type="term" value="F:DNA binding"/>
    <property type="evidence" value="ECO:0007669"/>
    <property type="project" value="UniProtKB-KW"/>
</dbReference>
<dbReference type="GO" id="GO:0003700">
    <property type="term" value="F:DNA-binding transcription factor activity"/>
    <property type="evidence" value="ECO:0000250"/>
    <property type="project" value="TAIR"/>
</dbReference>
<dbReference type="GO" id="GO:0042742">
    <property type="term" value="P:defense response to bacterium"/>
    <property type="evidence" value="ECO:0000315"/>
    <property type="project" value="TAIR"/>
</dbReference>
<dbReference type="GO" id="GO:0050832">
    <property type="term" value="P:defense response to fungus"/>
    <property type="evidence" value="ECO:0000315"/>
    <property type="project" value="TAIR"/>
</dbReference>
<dbReference type="GO" id="GO:0006281">
    <property type="term" value="P:DNA repair"/>
    <property type="evidence" value="ECO:0007669"/>
    <property type="project" value="UniProtKB-KW"/>
</dbReference>
<dbReference type="GO" id="GO:0045087">
    <property type="term" value="P:innate immune response"/>
    <property type="evidence" value="ECO:0007669"/>
    <property type="project" value="UniProtKB-KW"/>
</dbReference>
<dbReference type="GO" id="GO:0000398">
    <property type="term" value="P:mRNA splicing, via spliceosome"/>
    <property type="evidence" value="ECO:0007669"/>
    <property type="project" value="InterPro"/>
</dbReference>
<dbReference type="GO" id="GO:0006355">
    <property type="term" value="P:regulation of DNA-templated transcription"/>
    <property type="evidence" value="ECO:0000304"/>
    <property type="project" value="TAIR"/>
</dbReference>
<dbReference type="CDD" id="cd00167">
    <property type="entry name" value="SANT"/>
    <property type="match status" value="1"/>
</dbReference>
<dbReference type="CDD" id="cd11659">
    <property type="entry name" value="SANT_CDC5_II"/>
    <property type="match status" value="1"/>
</dbReference>
<dbReference type="FunFam" id="1.10.10.60:FF:000021">
    <property type="entry name" value="CDC5 cell division cycle 5-like"/>
    <property type="match status" value="1"/>
</dbReference>
<dbReference type="FunFam" id="1.10.10.60:FF:000091">
    <property type="entry name" value="CDC5 cell division cycle 5-like"/>
    <property type="match status" value="1"/>
</dbReference>
<dbReference type="Gene3D" id="1.10.10.60">
    <property type="entry name" value="Homeodomain-like"/>
    <property type="match status" value="2"/>
</dbReference>
<dbReference type="InterPro" id="IPR047242">
    <property type="entry name" value="CDC5L/Cef1"/>
</dbReference>
<dbReference type="InterPro" id="IPR021786">
    <property type="entry name" value="Cdc5p/Cef1_C"/>
</dbReference>
<dbReference type="InterPro" id="IPR009057">
    <property type="entry name" value="Homeodomain-like_sf"/>
</dbReference>
<dbReference type="InterPro" id="IPR017930">
    <property type="entry name" value="Myb_dom"/>
</dbReference>
<dbReference type="InterPro" id="IPR001005">
    <property type="entry name" value="SANT/Myb"/>
</dbReference>
<dbReference type="InterPro" id="IPR047240">
    <property type="entry name" value="SANT_CDC5L_II"/>
</dbReference>
<dbReference type="PANTHER" id="PTHR45885">
    <property type="entry name" value="CELL DIVISION CYCLE 5-LIKE PROTEIN"/>
    <property type="match status" value="1"/>
</dbReference>
<dbReference type="PANTHER" id="PTHR45885:SF1">
    <property type="entry name" value="CELL DIVISION CYCLE 5-LIKE PROTEIN"/>
    <property type="match status" value="1"/>
</dbReference>
<dbReference type="Pfam" id="PF11831">
    <property type="entry name" value="Myb_Cef"/>
    <property type="match status" value="1"/>
</dbReference>
<dbReference type="Pfam" id="PF13921">
    <property type="entry name" value="Myb_DNA-bind_6"/>
    <property type="match status" value="1"/>
</dbReference>
<dbReference type="SMART" id="SM00717">
    <property type="entry name" value="SANT"/>
    <property type="match status" value="2"/>
</dbReference>
<dbReference type="SUPFAM" id="SSF46689">
    <property type="entry name" value="Homeodomain-like"/>
    <property type="match status" value="1"/>
</dbReference>
<dbReference type="PROSITE" id="PS51294">
    <property type="entry name" value="HTH_MYB"/>
    <property type="match status" value="2"/>
</dbReference>
<evidence type="ECO:0000250" key="1">
    <source>
        <dbReference type="UniProtKB" id="Q99459"/>
    </source>
</evidence>
<evidence type="ECO:0000255" key="2"/>
<evidence type="ECO:0000255" key="3">
    <source>
        <dbReference type="PROSITE-ProRule" id="PRU00625"/>
    </source>
</evidence>
<evidence type="ECO:0000256" key="4">
    <source>
        <dbReference type="SAM" id="MobiDB-lite"/>
    </source>
</evidence>
<evidence type="ECO:0000269" key="5">
    <source>
    </source>
</evidence>
<evidence type="ECO:0000269" key="6">
    <source>
    </source>
</evidence>
<evidence type="ECO:0000269" key="7">
    <source>
    </source>
</evidence>
<evidence type="ECO:0000269" key="8">
    <source>
    </source>
</evidence>
<evidence type="ECO:0000305" key="9"/>
<evidence type="ECO:0007744" key="10">
    <source>
    </source>
</evidence>
<keyword id="KW-0010">Activator</keyword>
<keyword id="KW-0131">Cell cycle</keyword>
<keyword id="KW-0175">Coiled coil</keyword>
<keyword id="KW-0227">DNA damage</keyword>
<keyword id="KW-0234">DNA repair</keyword>
<keyword id="KW-0238">DNA-binding</keyword>
<keyword id="KW-0391">Immunity</keyword>
<keyword id="KW-0399">Innate immunity</keyword>
<keyword id="KW-0507">mRNA processing</keyword>
<keyword id="KW-0508">mRNA splicing</keyword>
<keyword id="KW-0539">Nucleus</keyword>
<keyword id="KW-0597">Phosphoprotein</keyword>
<keyword id="KW-0611">Plant defense</keyword>
<keyword id="KW-1185">Reference proteome</keyword>
<keyword id="KW-0677">Repeat</keyword>
<keyword id="KW-0747">Spliceosome</keyword>
<keyword id="KW-0804">Transcription</keyword>
<keyword id="KW-0805">Transcription regulation</keyword>
<feature type="chain" id="PRO_0000391630" description="Cell division cycle 5-like protein">
    <location>
        <begin position="1"/>
        <end position="844"/>
    </location>
</feature>
<feature type="domain" description="HTH myb-type 1" evidence="3">
    <location>
        <begin position="2"/>
        <end position="57"/>
    </location>
</feature>
<feature type="domain" description="HTH myb-type 2" evidence="3">
    <location>
        <begin position="58"/>
        <end position="107"/>
    </location>
</feature>
<feature type="DNA-binding region" description="H-T-H motif" evidence="3">
    <location>
        <begin position="30"/>
        <end position="53"/>
    </location>
</feature>
<feature type="DNA-binding region" description="H-T-H motif" evidence="3">
    <location>
        <begin position="81"/>
        <end position="103"/>
    </location>
</feature>
<feature type="region of interest" description="Disordered" evidence="4">
    <location>
        <begin position="113"/>
        <end position="147"/>
    </location>
</feature>
<feature type="region of interest" description="Disordered" evidence="4">
    <location>
        <begin position="379"/>
        <end position="514"/>
    </location>
</feature>
<feature type="coiled-coil region" evidence="2">
    <location>
        <begin position="145"/>
        <end position="189"/>
    </location>
</feature>
<feature type="coiled-coil region" evidence="2">
    <location>
        <begin position="685"/>
        <end position="723"/>
    </location>
</feature>
<feature type="compositionally biased region" description="Basic and acidic residues" evidence="4">
    <location>
        <begin position="113"/>
        <end position="126"/>
    </location>
</feature>
<feature type="compositionally biased region" description="Polar residues" evidence="4">
    <location>
        <begin position="406"/>
        <end position="416"/>
    </location>
</feature>
<feature type="compositionally biased region" description="Polar residues" evidence="4">
    <location>
        <begin position="433"/>
        <end position="442"/>
    </location>
</feature>
<feature type="compositionally biased region" description="Basic and acidic residues" evidence="4">
    <location>
        <begin position="446"/>
        <end position="475"/>
    </location>
</feature>
<feature type="compositionally biased region" description="Acidic residues" evidence="4">
    <location>
        <begin position="500"/>
        <end position="513"/>
    </location>
</feature>
<feature type="modified residue" description="Phosphothreonine" evidence="10">
    <location>
        <position position="343"/>
    </location>
</feature>
<feature type="sequence conflict" description="In Ref. 2; AAS10023." evidence="9" ref="2">
    <original>E</original>
    <variation>K</variation>
    <location>
        <position position="177"/>
    </location>
</feature>
<feature type="sequence conflict" description="In Ref. 1; BAA09598." evidence="9" ref="1">
    <original>HE</original>
    <variation>QQ</variation>
    <location>
        <begin position="460"/>
        <end position="461"/>
    </location>
</feature>
<feature type="sequence conflict" description="In Ref. 6; BAH19597." evidence="9" ref="6">
    <original>S</original>
    <variation>G</variation>
    <location>
        <position position="476"/>
    </location>
</feature>
<proteinExistence type="evidence at protein level"/>
<organism>
    <name type="scientific">Arabidopsis thaliana</name>
    <name type="common">Mouse-ear cress</name>
    <dbReference type="NCBI Taxonomy" id="3702"/>
    <lineage>
        <taxon>Eukaryota</taxon>
        <taxon>Viridiplantae</taxon>
        <taxon>Streptophyta</taxon>
        <taxon>Embryophyta</taxon>
        <taxon>Tracheophyta</taxon>
        <taxon>Spermatophyta</taxon>
        <taxon>Magnoliopsida</taxon>
        <taxon>eudicotyledons</taxon>
        <taxon>Gunneridae</taxon>
        <taxon>Pentapetalae</taxon>
        <taxon>rosids</taxon>
        <taxon>malvids</taxon>
        <taxon>Brassicales</taxon>
        <taxon>Brassicaceae</taxon>
        <taxon>Camelineae</taxon>
        <taxon>Arabidopsis</taxon>
    </lineage>
</organism>
<accession>P92948</accession>
<accession>B9DFT0</accession>
<accession>O04498</accession>
<accession>Q6R0C5</accession>
<gene>
    <name type="primary">CDC5</name>
    <name type="synonym">MAC1</name>
    <name type="synonym">MYBCD5</name>
    <name type="ordered locus">At1g09770</name>
    <name type="ORF">F21M12.15</name>
</gene>
<sequence>MRIMIKGGVWKNTEDEILKAAVMKYGKNQWARISSLLVRKSAKQCKARWYEWLDPSIKKTEWTREEDEKLLHLAKLLPTQWRTIAPIVGRTPSQCLERYEKLLDAACTKDENYDAADDPRKLRPGEIDPNPEAKPARPDPVDMDEDEKEMLSEARARLANTRGKKAKRKAREKQLEEARRLASLQKRRELKAAGIDGRHRKRKRKGIDYNAEIPFEKRAPAGFYDTADEDRPADQVKFPTTIEELEGKRRADVEAHLRKQDVARNKIAQRQDAPAAILQANKLNDPEVVRKRSKLMLPPPQISDHELEEIAKMGYASDLLAENEELTEGSAATRALLANYSQTPRQGMTPMRTPQRTPAGKGDAIMMEAENLARLRDSQTPLLGGENPELHPSDFTGVTPRKKEIQTPNPMLTPSMTPGGAGLTPRIGLTPSRDGSSFSMTPKGTPFRDELHINEDMDMHESAKLERQRREEARRSLRSGLTGLPQPKNEYQIVAQPPPEESEEPEEKIEEDMSDRIAREKAEEEARQQALLKKRSKVLQRDLPRPPAASLAVIRNSLLSADGDKSSVVPPTPIEVADKMVREELLQLLEHDNAKYPLDDKAEKKKGAKNRTNRSASQVLAIDDFDENELQEADKMIKEEGKFLCVSMGHENKTLDDFVEAHNTCVNDLMYFPTRSAYELSSVAGNADKVAAFQEEMENVRKKMEEDEKKAEHMKAKYKTYTKGHERRAETVWTQIEATLKQAEIGGTEVECFKALKRQEEMAASFRKKNLQEEVIKQKETESKLQTRYGNMLAMVEKAEEIMVGFRAQALKKQEDVEDSHKLKEAKLATGEEEDIAIAMEASA</sequence>
<name>CDC5L_ARATH</name>
<comment type="function">
    <text evidence="1 5 6 8">Component of the MAC complex that probably regulates defense responses through transcriptional control and thereby is essential for plant innate immunity. Possesses a sequence specific DNA sequence 'CTCAGCG' binding activity. Involved in mRNA splicing and cell cycle control. May also play a role in the response to DNA damage.</text>
</comment>
<comment type="subunit">
    <text evidence="6 7">Component of the multiprotein assembly MOS4-associated complex (MAC) at least composed of MOS4, CDC5, PRL1 and PRP19. Interacts with PRL1, MOS4 and PRP19A. Associated with the spliceosome.</text>
</comment>
<comment type="interaction">
    <interactant intactId="EBI-1382948">
        <id>P92948</id>
    </interactant>
    <interactant intactId="EBI-1382943">
        <id>Q949S9</id>
        <label>MOS4</label>
    </interactant>
    <organismsDiffer>false</organismsDiffer>
    <experiments>3</experiments>
</comment>
<comment type="interaction">
    <interactant intactId="EBI-1382948">
        <id>P92948</id>
    </interactant>
    <interactant intactId="EBI-1382964">
        <id>Q42384</id>
        <label>PRL1</label>
    </interactant>
    <organismsDiffer>false</organismsDiffer>
    <experiments>2</experiments>
</comment>
<comment type="subcellular location">
    <subcellularLocation>
        <location evidence="3 5">Nucleus</location>
    </subcellularLocation>
</comment>
<comment type="tissue specificity">
    <text evidence="8">Expressed extensively in shoot and root meristems.</text>
</comment>
<comment type="disruption phenotype">
    <text evidence="5 6">Accelerated cell death. Enhanced susceptibility to virulent and avirulent pathogens.</text>
</comment>
<comment type="similarity">
    <text evidence="9">Belongs to the CEF1 family.</text>
</comment>
<protein>
    <recommendedName>
        <fullName>Cell division cycle 5-like protein</fullName>
        <shortName>Cdc5-like protein</shortName>
    </recommendedName>
    <alternativeName>
        <fullName>Atypical R2R3-MYB transcription factor CDC5</fullName>
    </alternativeName>
    <alternativeName>
        <fullName>MOS4-associated complex protein 1</fullName>
        <shortName>MAC protein 1</shortName>
    </alternativeName>
    <alternativeName>
        <fullName>Protein MYB DOMAIN CELL DIVISION CYCLE 5</fullName>
        <shortName>AtMYBCD5</shortName>
    </alternativeName>
</protein>